<name>ISPE_CLOBA</name>
<keyword id="KW-0067">ATP-binding</keyword>
<keyword id="KW-0414">Isoprene biosynthesis</keyword>
<keyword id="KW-0418">Kinase</keyword>
<keyword id="KW-0547">Nucleotide-binding</keyword>
<keyword id="KW-0808">Transferase</keyword>
<dbReference type="EC" id="2.7.1.148" evidence="1"/>
<dbReference type="EMBL" id="CP001078">
    <property type="protein sequence ID" value="ACD53283.1"/>
    <property type="molecule type" value="Genomic_DNA"/>
</dbReference>
<dbReference type="RefSeq" id="WP_012451223.1">
    <property type="nucleotide sequence ID" value="NC_010723.1"/>
</dbReference>
<dbReference type="SMR" id="B2UZH3"/>
<dbReference type="KEGG" id="cbt:CLH_0463"/>
<dbReference type="HOGENOM" id="CLU_053057_1_1_9"/>
<dbReference type="UniPathway" id="UPA00056">
    <property type="reaction ID" value="UER00094"/>
</dbReference>
<dbReference type="GO" id="GO:0050515">
    <property type="term" value="F:4-(cytidine 5'-diphospho)-2-C-methyl-D-erythritol kinase activity"/>
    <property type="evidence" value="ECO:0007669"/>
    <property type="project" value="UniProtKB-UniRule"/>
</dbReference>
<dbReference type="GO" id="GO:0005524">
    <property type="term" value="F:ATP binding"/>
    <property type="evidence" value="ECO:0007669"/>
    <property type="project" value="UniProtKB-UniRule"/>
</dbReference>
<dbReference type="GO" id="GO:0019288">
    <property type="term" value="P:isopentenyl diphosphate biosynthetic process, methylerythritol 4-phosphate pathway"/>
    <property type="evidence" value="ECO:0007669"/>
    <property type="project" value="UniProtKB-UniRule"/>
</dbReference>
<dbReference type="GO" id="GO:0016114">
    <property type="term" value="P:terpenoid biosynthetic process"/>
    <property type="evidence" value="ECO:0007669"/>
    <property type="project" value="InterPro"/>
</dbReference>
<dbReference type="FunFam" id="3.30.230.10:FF:000029">
    <property type="entry name" value="4-diphosphocytidyl-2-C-methyl-D-erythritol kinase"/>
    <property type="match status" value="1"/>
</dbReference>
<dbReference type="Gene3D" id="3.30.230.10">
    <property type="match status" value="1"/>
</dbReference>
<dbReference type="Gene3D" id="3.30.70.890">
    <property type="entry name" value="GHMP kinase, C-terminal domain"/>
    <property type="match status" value="1"/>
</dbReference>
<dbReference type="HAMAP" id="MF_00061">
    <property type="entry name" value="IspE"/>
    <property type="match status" value="1"/>
</dbReference>
<dbReference type="InterPro" id="IPR013750">
    <property type="entry name" value="GHMP_kinase_C_dom"/>
</dbReference>
<dbReference type="InterPro" id="IPR036554">
    <property type="entry name" value="GHMP_kinase_C_sf"/>
</dbReference>
<dbReference type="InterPro" id="IPR006204">
    <property type="entry name" value="GHMP_kinase_N_dom"/>
</dbReference>
<dbReference type="InterPro" id="IPR004424">
    <property type="entry name" value="IspE"/>
</dbReference>
<dbReference type="InterPro" id="IPR020568">
    <property type="entry name" value="Ribosomal_Su5_D2-typ_SF"/>
</dbReference>
<dbReference type="InterPro" id="IPR014721">
    <property type="entry name" value="Ribsml_uS5_D2-typ_fold_subgr"/>
</dbReference>
<dbReference type="NCBIfam" id="TIGR00154">
    <property type="entry name" value="ispE"/>
    <property type="match status" value="1"/>
</dbReference>
<dbReference type="PANTHER" id="PTHR43527">
    <property type="entry name" value="4-DIPHOSPHOCYTIDYL-2-C-METHYL-D-ERYTHRITOL KINASE, CHLOROPLASTIC"/>
    <property type="match status" value="1"/>
</dbReference>
<dbReference type="PANTHER" id="PTHR43527:SF2">
    <property type="entry name" value="4-DIPHOSPHOCYTIDYL-2-C-METHYL-D-ERYTHRITOL KINASE, CHLOROPLASTIC"/>
    <property type="match status" value="1"/>
</dbReference>
<dbReference type="Pfam" id="PF08544">
    <property type="entry name" value="GHMP_kinases_C"/>
    <property type="match status" value="1"/>
</dbReference>
<dbReference type="Pfam" id="PF00288">
    <property type="entry name" value="GHMP_kinases_N"/>
    <property type="match status" value="1"/>
</dbReference>
<dbReference type="PIRSF" id="PIRSF010376">
    <property type="entry name" value="IspE"/>
    <property type="match status" value="1"/>
</dbReference>
<dbReference type="SUPFAM" id="SSF55060">
    <property type="entry name" value="GHMP Kinase, C-terminal domain"/>
    <property type="match status" value="1"/>
</dbReference>
<dbReference type="SUPFAM" id="SSF54211">
    <property type="entry name" value="Ribosomal protein S5 domain 2-like"/>
    <property type="match status" value="1"/>
</dbReference>
<evidence type="ECO:0000255" key="1">
    <source>
        <dbReference type="HAMAP-Rule" id="MF_00061"/>
    </source>
</evidence>
<sequence length="280" mass="31275">MDIKAYAKINISLDVIGKRDDGYHLLKMIMQNIDLYDIVQVEKIPNGIKLKCNKPYVPTDERNLAYKAAKLFKETYNIKSGIYINIEKNIPVSAGLAGGSTDAAAVLKIMNKMFNINVTQSELMNLGLKLGADVPYCICGGTALCEGIGEKVTKLKPFRDKILVVVKPPFGVSTKEVYKAFDLSKVIFHPKTNELISNIEKNNIEFISNNMKNLLENVTLGRYKIISTIKEEINICGALGSMMSGSGPTVFGFFDDMLKAQKCYEKMKEKYVDVFITRTI</sequence>
<comment type="function">
    <text evidence="1">Catalyzes the phosphorylation of the position 2 hydroxy group of 4-diphosphocytidyl-2C-methyl-D-erythritol.</text>
</comment>
<comment type="catalytic activity">
    <reaction evidence="1">
        <text>4-CDP-2-C-methyl-D-erythritol + ATP = 4-CDP-2-C-methyl-D-erythritol 2-phosphate + ADP + H(+)</text>
        <dbReference type="Rhea" id="RHEA:18437"/>
        <dbReference type="ChEBI" id="CHEBI:15378"/>
        <dbReference type="ChEBI" id="CHEBI:30616"/>
        <dbReference type="ChEBI" id="CHEBI:57823"/>
        <dbReference type="ChEBI" id="CHEBI:57919"/>
        <dbReference type="ChEBI" id="CHEBI:456216"/>
        <dbReference type="EC" id="2.7.1.148"/>
    </reaction>
</comment>
<comment type="pathway">
    <text evidence="1">Isoprenoid biosynthesis; isopentenyl diphosphate biosynthesis via DXP pathway; isopentenyl diphosphate from 1-deoxy-D-xylulose 5-phosphate: step 3/6.</text>
</comment>
<comment type="similarity">
    <text evidence="1">Belongs to the GHMP kinase family. IspE subfamily.</text>
</comment>
<organism>
    <name type="scientific">Clostridium botulinum (strain Alaska E43 / Type E3)</name>
    <dbReference type="NCBI Taxonomy" id="508767"/>
    <lineage>
        <taxon>Bacteria</taxon>
        <taxon>Bacillati</taxon>
        <taxon>Bacillota</taxon>
        <taxon>Clostridia</taxon>
        <taxon>Eubacteriales</taxon>
        <taxon>Clostridiaceae</taxon>
        <taxon>Clostridium</taxon>
    </lineage>
</organism>
<proteinExistence type="inferred from homology"/>
<accession>B2UZH3</accession>
<gene>
    <name evidence="1" type="primary">ispE</name>
    <name type="ordered locus">CLH_0463</name>
</gene>
<protein>
    <recommendedName>
        <fullName evidence="1">4-diphosphocytidyl-2-C-methyl-D-erythritol kinase</fullName>
        <shortName evidence="1">CMK</shortName>
        <ecNumber evidence="1">2.7.1.148</ecNumber>
    </recommendedName>
    <alternativeName>
        <fullName evidence="1">4-(cytidine-5'-diphospho)-2-C-methyl-D-erythritol kinase</fullName>
    </alternativeName>
</protein>
<reference key="1">
    <citation type="submission" date="2008-05" db="EMBL/GenBank/DDBJ databases">
        <title>Complete genome sequence of Clostridium botulinum E3 str. Alaska E43.</title>
        <authorList>
            <person name="Brinkac L.M."/>
            <person name="Brown J.L."/>
            <person name="Bruce D."/>
            <person name="Detter C."/>
            <person name="Munk C."/>
            <person name="Smith L.A."/>
            <person name="Smith T.J."/>
            <person name="Sutton G."/>
            <person name="Brettin T.S."/>
        </authorList>
    </citation>
    <scope>NUCLEOTIDE SEQUENCE [LARGE SCALE GENOMIC DNA]</scope>
    <source>
        <strain>Alaska E43 / Type E3</strain>
    </source>
</reference>
<feature type="chain" id="PRO_1000092076" description="4-diphosphocytidyl-2-C-methyl-D-erythritol kinase">
    <location>
        <begin position="1"/>
        <end position="280"/>
    </location>
</feature>
<feature type="active site" evidence="1">
    <location>
        <position position="8"/>
    </location>
</feature>
<feature type="active site" evidence="1">
    <location>
        <position position="133"/>
    </location>
</feature>
<feature type="binding site" evidence="1">
    <location>
        <begin position="91"/>
        <end position="101"/>
    </location>
    <ligand>
        <name>ATP</name>
        <dbReference type="ChEBI" id="CHEBI:30616"/>
    </ligand>
</feature>